<sequence length="231" mass="26602">MTMHEFFENFGIKINDSKIFSTALTHNSYANETKTKETYQRLEFLGDAVLQMYVSKFLYLNFTNAPEGKLTKTRSDIVRQETLSEIAKMIDLGKIIRLGQGEIKSKGYEKPSILSDVYEAVTAAIYLDQTEEVLISWIKSTIFKYIEKNDYKELNHDYKSELQEIIQAEIRSDLEYRVESQKHIEKDNKIEYTVSVNLDGKKYGIGTGFSKQEASQNAAKDCLNKLKKSAK</sequence>
<evidence type="ECO:0000255" key="1">
    <source>
        <dbReference type="HAMAP-Rule" id="MF_00104"/>
    </source>
</evidence>
<accession>Q6F1N5</accession>
<comment type="function">
    <text evidence="1">Digests double-stranded RNA. Involved in the processing of primary rRNA transcript to yield the immediate precursors to the large and small rRNAs (23S and 16S). Processes some mRNAs, and tRNAs when they are encoded in the rRNA operon. Processes pre-crRNA and tracrRNA of type II CRISPR loci if present in the organism.</text>
</comment>
<comment type="catalytic activity">
    <reaction evidence="1">
        <text>Endonucleolytic cleavage to 5'-phosphomonoester.</text>
        <dbReference type="EC" id="3.1.26.3"/>
    </reaction>
</comment>
<comment type="cofactor">
    <cofactor evidence="1">
        <name>Mg(2+)</name>
        <dbReference type="ChEBI" id="CHEBI:18420"/>
    </cofactor>
</comment>
<comment type="subunit">
    <text evidence="1">Homodimer.</text>
</comment>
<comment type="subcellular location">
    <subcellularLocation>
        <location evidence="1">Cytoplasm</location>
    </subcellularLocation>
</comment>
<comment type="similarity">
    <text evidence="1">Belongs to the ribonuclease III family.</text>
</comment>
<reference key="1">
    <citation type="submission" date="2004-06" db="EMBL/GenBank/DDBJ databases">
        <authorList>
            <person name="Birren B.W."/>
            <person name="Stange-Thomann N."/>
            <person name="Hafez N."/>
            <person name="DeCaprio D."/>
            <person name="Fisher S."/>
            <person name="Butler J."/>
            <person name="Elkins T."/>
            <person name="Kodira C.D."/>
            <person name="Major J."/>
            <person name="Wang S."/>
            <person name="Nicol R."/>
            <person name="Nusbaum C."/>
        </authorList>
    </citation>
    <scope>NUCLEOTIDE SEQUENCE [LARGE SCALE GENOMIC DNA]</scope>
    <source>
        <strain>ATCC 33453 / NBRC 100688 / NCTC 11704 / L1</strain>
    </source>
</reference>
<protein>
    <recommendedName>
        <fullName evidence="1">Ribonuclease 3</fullName>
        <ecNumber evidence="1">3.1.26.3</ecNumber>
    </recommendedName>
    <alternativeName>
        <fullName evidence="1">Ribonuclease III</fullName>
        <shortName evidence="1">RNase III</shortName>
    </alternativeName>
</protein>
<organism>
    <name type="scientific">Mesoplasma florum (strain ATCC 33453 / NBRC 100688 / NCTC 11704 / L1)</name>
    <name type="common">Acholeplasma florum</name>
    <dbReference type="NCBI Taxonomy" id="265311"/>
    <lineage>
        <taxon>Bacteria</taxon>
        <taxon>Bacillati</taxon>
        <taxon>Mycoplasmatota</taxon>
        <taxon>Mollicutes</taxon>
        <taxon>Entomoplasmatales</taxon>
        <taxon>Entomoplasmataceae</taxon>
        <taxon>Mesoplasma</taxon>
    </lineage>
</organism>
<dbReference type="EC" id="3.1.26.3" evidence="1"/>
<dbReference type="EMBL" id="AE017263">
    <property type="protein sequence ID" value="AAT75588.1"/>
    <property type="molecule type" value="Genomic_DNA"/>
</dbReference>
<dbReference type="RefSeq" id="WP_011183128.1">
    <property type="nucleotide sequence ID" value="NC_006055.1"/>
</dbReference>
<dbReference type="RefSeq" id="YP_053472.1">
    <property type="nucleotide sequence ID" value="NC_006055.1"/>
</dbReference>
<dbReference type="SMR" id="Q6F1N5"/>
<dbReference type="STRING" id="265311.Mfl231"/>
<dbReference type="PaxDb" id="265311-Mfl231"/>
<dbReference type="EnsemblBacteria" id="AAT75588">
    <property type="protein sequence ID" value="AAT75588"/>
    <property type="gene ID" value="Mfl231"/>
</dbReference>
<dbReference type="GeneID" id="2897980"/>
<dbReference type="KEGG" id="mfl:Mfl231"/>
<dbReference type="PATRIC" id="fig|265311.5.peg.231"/>
<dbReference type="eggNOG" id="COG0571">
    <property type="taxonomic scope" value="Bacteria"/>
</dbReference>
<dbReference type="HOGENOM" id="CLU_000907_1_3_14"/>
<dbReference type="OrthoDB" id="9805026at2"/>
<dbReference type="Proteomes" id="UP000006647">
    <property type="component" value="Chromosome"/>
</dbReference>
<dbReference type="GO" id="GO:0005737">
    <property type="term" value="C:cytoplasm"/>
    <property type="evidence" value="ECO:0007669"/>
    <property type="project" value="UniProtKB-SubCell"/>
</dbReference>
<dbReference type="GO" id="GO:0003725">
    <property type="term" value="F:double-stranded RNA binding"/>
    <property type="evidence" value="ECO:0007669"/>
    <property type="project" value="TreeGrafter"/>
</dbReference>
<dbReference type="GO" id="GO:0046872">
    <property type="term" value="F:metal ion binding"/>
    <property type="evidence" value="ECO:0007669"/>
    <property type="project" value="UniProtKB-KW"/>
</dbReference>
<dbReference type="GO" id="GO:0004525">
    <property type="term" value="F:ribonuclease III activity"/>
    <property type="evidence" value="ECO:0007669"/>
    <property type="project" value="UniProtKB-UniRule"/>
</dbReference>
<dbReference type="GO" id="GO:0019843">
    <property type="term" value="F:rRNA binding"/>
    <property type="evidence" value="ECO:0007669"/>
    <property type="project" value="UniProtKB-KW"/>
</dbReference>
<dbReference type="GO" id="GO:0006397">
    <property type="term" value="P:mRNA processing"/>
    <property type="evidence" value="ECO:0007669"/>
    <property type="project" value="UniProtKB-UniRule"/>
</dbReference>
<dbReference type="GO" id="GO:0010468">
    <property type="term" value="P:regulation of gene expression"/>
    <property type="evidence" value="ECO:0007669"/>
    <property type="project" value="TreeGrafter"/>
</dbReference>
<dbReference type="GO" id="GO:0006364">
    <property type="term" value="P:rRNA processing"/>
    <property type="evidence" value="ECO:0007669"/>
    <property type="project" value="UniProtKB-UniRule"/>
</dbReference>
<dbReference type="GO" id="GO:0008033">
    <property type="term" value="P:tRNA processing"/>
    <property type="evidence" value="ECO:0007669"/>
    <property type="project" value="UniProtKB-KW"/>
</dbReference>
<dbReference type="CDD" id="cd10845">
    <property type="entry name" value="DSRM_RNAse_III_family"/>
    <property type="match status" value="1"/>
</dbReference>
<dbReference type="CDD" id="cd00593">
    <property type="entry name" value="RIBOc"/>
    <property type="match status" value="1"/>
</dbReference>
<dbReference type="FunFam" id="1.10.1520.10:FF:000001">
    <property type="entry name" value="Ribonuclease 3"/>
    <property type="match status" value="1"/>
</dbReference>
<dbReference type="Gene3D" id="3.30.160.20">
    <property type="match status" value="1"/>
</dbReference>
<dbReference type="Gene3D" id="1.10.1520.10">
    <property type="entry name" value="Ribonuclease III domain"/>
    <property type="match status" value="1"/>
</dbReference>
<dbReference type="HAMAP" id="MF_00104">
    <property type="entry name" value="RNase_III"/>
    <property type="match status" value="1"/>
</dbReference>
<dbReference type="InterPro" id="IPR014720">
    <property type="entry name" value="dsRBD_dom"/>
</dbReference>
<dbReference type="InterPro" id="IPR011907">
    <property type="entry name" value="RNase_III"/>
</dbReference>
<dbReference type="InterPro" id="IPR000999">
    <property type="entry name" value="RNase_III_dom"/>
</dbReference>
<dbReference type="InterPro" id="IPR036389">
    <property type="entry name" value="RNase_III_sf"/>
</dbReference>
<dbReference type="NCBIfam" id="TIGR02191">
    <property type="entry name" value="RNaseIII"/>
    <property type="match status" value="1"/>
</dbReference>
<dbReference type="PANTHER" id="PTHR11207:SF0">
    <property type="entry name" value="RIBONUCLEASE 3"/>
    <property type="match status" value="1"/>
</dbReference>
<dbReference type="PANTHER" id="PTHR11207">
    <property type="entry name" value="RIBONUCLEASE III"/>
    <property type="match status" value="1"/>
</dbReference>
<dbReference type="Pfam" id="PF00035">
    <property type="entry name" value="dsrm"/>
    <property type="match status" value="1"/>
</dbReference>
<dbReference type="Pfam" id="PF14622">
    <property type="entry name" value="Ribonucleas_3_3"/>
    <property type="match status" value="1"/>
</dbReference>
<dbReference type="SMART" id="SM00358">
    <property type="entry name" value="DSRM"/>
    <property type="match status" value="1"/>
</dbReference>
<dbReference type="SMART" id="SM00535">
    <property type="entry name" value="RIBOc"/>
    <property type="match status" value="1"/>
</dbReference>
<dbReference type="SUPFAM" id="SSF54768">
    <property type="entry name" value="dsRNA-binding domain-like"/>
    <property type="match status" value="1"/>
</dbReference>
<dbReference type="SUPFAM" id="SSF69065">
    <property type="entry name" value="RNase III domain-like"/>
    <property type="match status" value="1"/>
</dbReference>
<dbReference type="PROSITE" id="PS50137">
    <property type="entry name" value="DS_RBD"/>
    <property type="match status" value="1"/>
</dbReference>
<dbReference type="PROSITE" id="PS00517">
    <property type="entry name" value="RNASE_3_1"/>
    <property type="match status" value="1"/>
</dbReference>
<dbReference type="PROSITE" id="PS50142">
    <property type="entry name" value="RNASE_3_2"/>
    <property type="match status" value="1"/>
</dbReference>
<name>RNC_MESFL</name>
<feature type="chain" id="PRO_0000228547" description="Ribonuclease 3">
    <location>
        <begin position="1"/>
        <end position="231"/>
    </location>
</feature>
<feature type="domain" description="RNase III" evidence="1">
    <location>
        <begin position="3"/>
        <end position="130"/>
    </location>
</feature>
<feature type="domain" description="DRBM" evidence="1">
    <location>
        <begin position="157"/>
        <end position="228"/>
    </location>
</feature>
<feature type="active site" evidence="1">
    <location>
        <position position="47"/>
    </location>
</feature>
<feature type="active site" evidence="1">
    <location>
        <position position="119"/>
    </location>
</feature>
<feature type="binding site" evidence="1">
    <location>
        <position position="43"/>
    </location>
    <ligand>
        <name>Mg(2+)</name>
        <dbReference type="ChEBI" id="CHEBI:18420"/>
    </ligand>
</feature>
<feature type="binding site" evidence="1">
    <location>
        <position position="116"/>
    </location>
    <ligand>
        <name>Mg(2+)</name>
        <dbReference type="ChEBI" id="CHEBI:18420"/>
    </ligand>
</feature>
<feature type="binding site" evidence="1">
    <location>
        <position position="119"/>
    </location>
    <ligand>
        <name>Mg(2+)</name>
        <dbReference type="ChEBI" id="CHEBI:18420"/>
    </ligand>
</feature>
<proteinExistence type="inferred from homology"/>
<keyword id="KW-0963">Cytoplasm</keyword>
<keyword id="KW-0255">Endonuclease</keyword>
<keyword id="KW-0378">Hydrolase</keyword>
<keyword id="KW-0460">Magnesium</keyword>
<keyword id="KW-0479">Metal-binding</keyword>
<keyword id="KW-0507">mRNA processing</keyword>
<keyword id="KW-0540">Nuclease</keyword>
<keyword id="KW-1185">Reference proteome</keyword>
<keyword id="KW-0694">RNA-binding</keyword>
<keyword id="KW-0698">rRNA processing</keyword>
<keyword id="KW-0699">rRNA-binding</keyword>
<keyword id="KW-0819">tRNA processing</keyword>
<gene>
    <name evidence="1" type="primary">rnc</name>
    <name type="ordered locus">Mfl231</name>
</gene>